<dbReference type="EMBL" id="AE000516">
    <property type="protein sequence ID" value="AAK45868.1"/>
    <property type="status" value="ALT_INIT"/>
    <property type="molecule type" value="Genomic_DNA"/>
</dbReference>
<dbReference type="PIR" id="D70762">
    <property type="entry name" value="D70762"/>
</dbReference>
<dbReference type="RefSeq" id="WP_003407762.1">
    <property type="nucleotide sequence ID" value="NZ_KK341227.1"/>
</dbReference>
<dbReference type="SMR" id="P9WI58"/>
<dbReference type="KEGG" id="mtc:MT1601"/>
<dbReference type="PATRIC" id="fig|83331.31.peg.1723"/>
<dbReference type="HOGENOM" id="CLU_015407_1_0_11"/>
<dbReference type="Proteomes" id="UP000001020">
    <property type="component" value="Chromosome"/>
</dbReference>
<dbReference type="GO" id="GO:0005886">
    <property type="term" value="C:plasma membrane"/>
    <property type="evidence" value="ECO:0007669"/>
    <property type="project" value="UniProtKB-SubCell"/>
</dbReference>
<dbReference type="GO" id="GO:0004366">
    <property type="term" value="F:glycerol-3-phosphate O-acyltransferase activity"/>
    <property type="evidence" value="ECO:0007669"/>
    <property type="project" value="InterPro"/>
</dbReference>
<dbReference type="GO" id="GO:0008654">
    <property type="term" value="P:phospholipid biosynthetic process"/>
    <property type="evidence" value="ECO:0007669"/>
    <property type="project" value="InterPro"/>
</dbReference>
<dbReference type="CDD" id="cd07993">
    <property type="entry name" value="LPLAT_DHAPAT-like"/>
    <property type="match status" value="1"/>
</dbReference>
<dbReference type="InterPro" id="IPR022284">
    <property type="entry name" value="GPAT/DHAPAT"/>
</dbReference>
<dbReference type="InterPro" id="IPR045520">
    <property type="entry name" value="GPAT/DHAPAT_C"/>
</dbReference>
<dbReference type="InterPro" id="IPR041728">
    <property type="entry name" value="GPAT/DHAPAT_LPLAT"/>
</dbReference>
<dbReference type="InterPro" id="IPR028354">
    <property type="entry name" value="GPAT_PlsB"/>
</dbReference>
<dbReference type="InterPro" id="IPR002123">
    <property type="entry name" value="Plipid/glycerol_acylTrfase"/>
</dbReference>
<dbReference type="NCBIfam" id="NF008883">
    <property type="entry name" value="PRK11915.1"/>
    <property type="match status" value="1"/>
</dbReference>
<dbReference type="PANTHER" id="PTHR12563:SF17">
    <property type="entry name" value="DIHYDROXYACETONE PHOSPHATE ACYLTRANSFERASE"/>
    <property type="match status" value="1"/>
</dbReference>
<dbReference type="PANTHER" id="PTHR12563">
    <property type="entry name" value="GLYCEROL-3-PHOSPHATE ACYLTRANSFERASE"/>
    <property type="match status" value="1"/>
</dbReference>
<dbReference type="Pfam" id="PF01553">
    <property type="entry name" value="Acyltransferase"/>
    <property type="match status" value="1"/>
</dbReference>
<dbReference type="Pfam" id="PF19277">
    <property type="entry name" value="GPAT_C"/>
    <property type="match status" value="1"/>
</dbReference>
<dbReference type="PIRSF" id="PIRSF500064">
    <property type="entry name" value="GPAT"/>
    <property type="match status" value="1"/>
</dbReference>
<dbReference type="PIRSF" id="PIRSF000437">
    <property type="entry name" value="GPAT_DHAPAT"/>
    <property type="match status" value="1"/>
</dbReference>
<dbReference type="SMART" id="SM00563">
    <property type="entry name" value="PlsC"/>
    <property type="match status" value="1"/>
</dbReference>
<dbReference type="SUPFAM" id="SSF69593">
    <property type="entry name" value="Glycerol-3-phosphate (1)-acyltransferase"/>
    <property type="match status" value="1"/>
</dbReference>
<accession>P9WI58</accession>
<accession>L0T8L2</accession>
<accession>P65734</accession>
<accession>Q10775</accession>
<sequence>MTAREVGRIGLRKLLQRIGIVAESMTPLATDPVEVTQLLDARWYDERLRALADELGRDPDSVRAEAAGYLREMAASLDERAVQAWRGFSRWLMRAYDVLVDEDQITQLRKLDRKATLAFAFSHRSYLDGMLLPEAILANRLSPALTFGGANLNFFPMGAWAKRTGAIFIRRQTKDIPVYRFVLRAYAAQLVQNHVNLTWSIEGGRTRTGKLRPPVFGILRYITDAVDEIDGPEVYLVPTSIVYDQLHEVEAMTTEAYGAVKRPEDLRFLVRLARQQGERLGRAYLDFGEPLPLRKRLQEMRADKSGTGSEIERIALDVEHRINRATPVTPTAVVSLALLGADRSLSISEVLATVRPLASYIAARNWAVAGAADLTNRSTIRWTLHQMVASGVVSVYDAGTEAVWGIGEDQHLVAAFYRNTAIHILVDRAVAELALLAAAETTTNGSVSPATVRDEALSLRDLLKFEFLFSGRAQFEKDLANEVLLIGSVVDTSKPAAAADVWRLLESADVLLAHLVLRPFLDAYHIVADRLAAHEDDSFDEEGFLAECLQVGKQWELQRNIASAESRSMELFKTALRLARHRELVDGADATDIAKRRQQFADEIATATRRVNTIAELARRQ</sequence>
<organism>
    <name type="scientific">Mycobacterium tuberculosis (strain CDC 1551 / Oshkosh)</name>
    <dbReference type="NCBI Taxonomy" id="83331"/>
    <lineage>
        <taxon>Bacteria</taxon>
        <taxon>Bacillati</taxon>
        <taxon>Actinomycetota</taxon>
        <taxon>Actinomycetes</taxon>
        <taxon>Mycobacteriales</taxon>
        <taxon>Mycobacteriaceae</taxon>
        <taxon>Mycobacterium</taxon>
        <taxon>Mycobacterium tuberculosis complex</taxon>
    </lineage>
</organism>
<gene>
    <name type="primary">plsB1</name>
    <name type="ordered locus">MT1601</name>
</gene>
<feature type="chain" id="PRO_0000428064" description="Putative acyltransferase plsB1">
    <location>
        <begin position="1"/>
        <end position="621"/>
    </location>
</feature>
<feature type="short sequence motif" description="HXXXXD motif">
    <location>
        <begin position="123"/>
        <end position="128"/>
    </location>
</feature>
<reference key="1">
    <citation type="journal article" date="2002" name="J. Bacteriol.">
        <title>Whole-genome comparison of Mycobacterium tuberculosis clinical and laboratory strains.</title>
        <authorList>
            <person name="Fleischmann R.D."/>
            <person name="Alland D."/>
            <person name="Eisen J.A."/>
            <person name="Carpenter L."/>
            <person name="White O."/>
            <person name="Peterson J.D."/>
            <person name="DeBoy R.T."/>
            <person name="Dodson R.J."/>
            <person name="Gwinn M.L."/>
            <person name="Haft D.H."/>
            <person name="Hickey E.K."/>
            <person name="Kolonay J.F."/>
            <person name="Nelson W.C."/>
            <person name="Umayam L.A."/>
            <person name="Ermolaeva M.D."/>
            <person name="Salzberg S.L."/>
            <person name="Delcher A."/>
            <person name="Utterback T.R."/>
            <person name="Weidman J.F."/>
            <person name="Khouri H.M."/>
            <person name="Gill J."/>
            <person name="Mikula A."/>
            <person name="Bishai W."/>
            <person name="Jacobs W.R. Jr."/>
            <person name="Venter J.C."/>
            <person name="Fraser C.M."/>
        </authorList>
    </citation>
    <scope>NUCLEOTIDE SEQUENCE [LARGE SCALE GENOMIC DNA]</scope>
    <source>
        <strain>CDC 1551 / Oshkosh</strain>
    </source>
</reference>
<name>PLSB1_MYCTO</name>
<evidence type="ECO:0000250" key="1"/>
<evidence type="ECO:0000305" key="2"/>
<comment type="subcellular location">
    <subcellularLocation>
        <location evidence="1">Cell membrane</location>
        <topology evidence="1">Peripheral membrane protein</topology>
        <orientation evidence="1">Cytoplasmic side</orientation>
    </subcellularLocation>
</comment>
<comment type="domain">
    <text evidence="1">The HXXXXD motif is essential for acyltransferase activity and may constitute the binding site for the phosphate moiety of the glycerol-3-phosphate.</text>
</comment>
<comment type="similarity">
    <text evidence="2">Belongs to the GPAT/DAPAT family.</text>
</comment>
<comment type="sequence caution" evidence="2">
    <conflict type="erroneous initiation">
        <sequence resource="EMBL-CDS" id="AAK45868"/>
    </conflict>
</comment>
<protein>
    <recommendedName>
        <fullName>Putative acyltransferase plsB1</fullName>
    </recommendedName>
</protein>
<keyword id="KW-0012">Acyltransferase</keyword>
<keyword id="KW-1003">Cell membrane</keyword>
<keyword id="KW-0472">Membrane</keyword>
<keyword id="KW-1185">Reference proteome</keyword>
<keyword id="KW-0808">Transferase</keyword>
<proteinExistence type="inferred from homology"/>